<dbReference type="EMBL" id="BX571857">
    <property type="protein sequence ID" value="CAG43560.1"/>
    <property type="molecule type" value="Genomic_DNA"/>
</dbReference>
<dbReference type="RefSeq" id="WP_000737978.1">
    <property type="nucleotide sequence ID" value="NC_002953.3"/>
</dbReference>
<dbReference type="SMR" id="Q6G8A1"/>
<dbReference type="KEGG" id="sas:SAS1756"/>
<dbReference type="HOGENOM" id="CLU_116220_0_0_9"/>
<dbReference type="GO" id="GO:0016020">
    <property type="term" value="C:membrane"/>
    <property type="evidence" value="ECO:0007669"/>
    <property type="project" value="UniProtKB-SubCell"/>
</dbReference>
<dbReference type="Gene3D" id="3.30.70.100">
    <property type="match status" value="1"/>
</dbReference>
<dbReference type="InterPro" id="IPR007138">
    <property type="entry name" value="ABM_dom"/>
</dbReference>
<dbReference type="InterPro" id="IPR011008">
    <property type="entry name" value="Dimeric_a/b-barrel"/>
</dbReference>
<dbReference type="InterPro" id="IPR050404">
    <property type="entry name" value="Heme-degrading_MO"/>
</dbReference>
<dbReference type="PANTHER" id="PTHR34474">
    <property type="entry name" value="SIGNAL TRANSDUCTION PROTEIN TRAP"/>
    <property type="match status" value="1"/>
</dbReference>
<dbReference type="PANTHER" id="PTHR34474:SF2">
    <property type="entry name" value="SIGNAL TRANSDUCTION PROTEIN TRAP"/>
    <property type="match status" value="1"/>
</dbReference>
<dbReference type="SUPFAM" id="SSF54909">
    <property type="entry name" value="Dimeric alpha+beta barrel"/>
    <property type="match status" value="1"/>
</dbReference>
<dbReference type="PROSITE" id="PS51725">
    <property type="entry name" value="ABM"/>
    <property type="match status" value="1"/>
</dbReference>
<reference key="1">
    <citation type="journal article" date="2004" name="Proc. Natl. Acad. Sci. U.S.A.">
        <title>Complete genomes of two clinical Staphylococcus aureus strains: evidence for the rapid evolution of virulence and drug resistance.</title>
        <authorList>
            <person name="Holden M.T.G."/>
            <person name="Feil E.J."/>
            <person name="Lindsay J.A."/>
            <person name="Peacock S.J."/>
            <person name="Day N.P.J."/>
            <person name="Enright M.C."/>
            <person name="Foster T.J."/>
            <person name="Moore C.E."/>
            <person name="Hurst L."/>
            <person name="Atkin R."/>
            <person name="Barron A."/>
            <person name="Bason N."/>
            <person name="Bentley S.D."/>
            <person name="Chillingworth C."/>
            <person name="Chillingworth T."/>
            <person name="Churcher C."/>
            <person name="Clark L."/>
            <person name="Corton C."/>
            <person name="Cronin A."/>
            <person name="Doggett J."/>
            <person name="Dowd L."/>
            <person name="Feltwell T."/>
            <person name="Hance Z."/>
            <person name="Harris B."/>
            <person name="Hauser H."/>
            <person name="Holroyd S."/>
            <person name="Jagels K."/>
            <person name="James K.D."/>
            <person name="Lennard N."/>
            <person name="Line A."/>
            <person name="Mayes R."/>
            <person name="Moule S."/>
            <person name="Mungall K."/>
            <person name="Ormond D."/>
            <person name="Quail M.A."/>
            <person name="Rabbinowitsch E."/>
            <person name="Rutherford K.M."/>
            <person name="Sanders M."/>
            <person name="Sharp S."/>
            <person name="Simmonds M."/>
            <person name="Stevens K."/>
            <person name="Whitehead S."/>
            <person name="Barrell B.G."/>
            <person name="Spratt B.G."/>
            <person name="Parkhill J."/>
        </authorList>
    </citation>
    <scope>NUCLEOTIDE SEQUENCE [LARGE SCALE GENOMIC DNA]</scope>
    <source>
        <strain>MSSA476</strain>
    </source>
</reference>
<name>TRAP_STAAS</name>
<protein>
    <recommendedName>
        <fullName>Signal transduction protein TRAP</fullName>
    </recommendedName>
    <alternativeName>
        <fullName>Target of RNAIII-activating protein</fullName>
    </alternativeName>
</protein>
<keyword id="KW-0472">Membrane</keyword>
<keyword id="KW-0597">Phosphoprotein</keyword>
<keyword id="KW-0843">Virulence</keyword>
<proteinExistence type="inferred from homology"/>
<accession>Q6G8A1</accession>
<gene>
    <name type="primary">traP</name>
    <name type="ordered locus">SAS1756</name>
</gene>
<feature type="chain" id="PRO_0000289339" description="Signal transduction protein TRAP">
    <location>
        <begin position="1"/>
        <end position="167"/>
    </location>
</feature>
<feature type="domain" description="ABM">
    <location>
        <begin position="67"/>
        <end position="158"/>
    </location>
</feature>
<feature type="modified residue" description="Phosphohistidine" evidence="1">
    <location>
        <position position="66"/>
    </location>
</feature>
<feature type="modified residue" description="Phosphohistidine" evidence="1">
    <location>
        <position position="79"/>
    </location>
</feature>
<feature type="modified residue" description="Phosphohistidine" evidence="1">
    <location>
        <position position="154"/>
    </location>
</feature>
<organism>
    <name type="scientific">Staphylococcus aureus (strain MSSA476)</name>
    <dbReference type="NCBI Taxonomy" id="282459"/>
    <lineage>
        <taxon>Bacteria</taxon>
        <taxon>Bacillati</taxon>
        <taxon>Bacillota</taxon>
        <taxon>Bacilli</taxon>
        <taxon>Bacillales</taxon>
        <taxon>Staphylococcaceae</taxon>
        <taxon>Staphylococcus</taxon>
    </lineage>
</organism>
<sequence length="167" mass="19563">MKKLYTSYGTYGFLHQIKINNPTHQLFQFSASDTSVIFEETDGETVLKSPTKYDVIKEIGEFSEHHFYCAIFIPSTEDHAYQLEKKLISVDDNFRNFGGFKSYRLLRPAKGTTYKIYFGFADRHAYEDFKQSDAFNDHFSKDALSHYFGSSGQHSSYFERYLYPIKE</sequence>
<evidence type="ECO:0000250" key="1"/>
<evidence type="ECO:0000305" key="2"/>
<comment type="function">
    <text evidence="1">Signal transduction protein, which is a major regulator of staphylococcal pathogenesis. Phosphorylated TRAP leads to the activation of agr system and consequent RNAIII synthesis resulting in the expression of several virulence factors. Up-regulates the expression of most toxins and genes known to be necessary for biofilm formation (By similarity).</text>
</comment>
<comment type="subcellular location">
    <subcellularLocation>
        <location>Membrane</location>
    </subcellularLocation>
    <text evidence="1">Membrane-associated.</text>
</comment>
<comment type="PTM">
    <text evidence="1">Each of the three conserved histidine residues contributes to TRAP phosphorylation. Phosphorylation is essential for TRAP activity (By similarity).</text>
</comment>
<comment type="PTM">
    <text evidence="1">Phosphorylation of TRAP is activated by RAP and necessary for the induction of RNAIII gene expression but not for ongoing transcription. TRAP is dephosphorylated from the mid-exponential phase of growth, which is when agr is activated and AIP is produced. RIP acts by inhibiting TRAP phosphorylation (By similarity).</text>
</comment>
<comment type="similarity">
    <text evidence="2">Belongs to the TRAP family.</text>
</comment>